<comment type="function">
    <text evidence="1">Binds to 23S rRNA.</text>
</comment>
<comment type="subunit">
    <text evidence="1">Part of the 50S ribosomal subunit.</text>
</comment>
<comment type="subcellular location">
    <subcellularLocation>
        <location>Plastid</location>
        <location>Chloroplast</location>
    </subcellularLocation>
</comment>
<comment type="similarity">
    <text evidence="1">Belongs to the universal ribosomal protein uL14 family.</text>
</comment>
<dbReference type="EMBL" id="DQ923117">
    <property type="protein sequence ID" value="ABI49901.1"/>
    <property type="molecule type" value="Genomic_DNA"/>
</dbReference>
<dbReference type="RefSeq" id="YP_740687.1">
    <property type="nucleotide sequence ID" value="NC_008336.1"/>
</dbReference>
<dbReference type="SMR" id="Q09FS4"/>
<dbReference type="GeneID" id="4271698"/>
<dbReference type="GO" id="GO:0009507">
    <property type="term" value="C:chloroplast"/>
    <property type="evidence" value="ECO:0007669"/>
    <property type="project" value="UniProtKB-SubCell"/>
</dbReference>
<dbReference type="GO" id="GO:0022625">
    <property type="term" value="C:cytosolic large ribosomal subunit"/>
    <property type="evidence" value="ECO:0007669"/>
    <property type="project" value="TreeGrafter"/>
</dbReference>
<dbReference type="GO" id="GO:0070180">
    <property type="term" value="F:large ribosomal subunit rRNA binding"/>
    <property type="evidence" value="ECO:0007669"/>
    <property type="project" value="TreeGrafter"/>
</dbReference>
<dbReference type="GO" id="GO:0003735">
    <property type="term" value="F:structural constituent of ribosome"/>
    <property type="evidence" value="ECO:0007669"/>
    <property type="project" value="InterPro"/>
</dbReference>
<dbReference type="GO" id="GO:0006412">
    <property type="term" value="P:translation"/>
    <property type="evidence" value="ECO:0007669"/>
    <property type="project" value="UniProtKB-UniRule"/>
</dbReference>
<dbReference type="CDD" id="cd00337">
    <property type="entry name" value="Ribosomal_uL14"/>
    <property type="match status" value="1"/>
</dbReference>
<dbReference type="FunFam" id="2.40.150.20:FF:000002">
    <property type="entry name" value="50S ribosomal protein L14, chloroplastic"/>
    <property type="match status" value="1"/>
</dbReference>
<dbReference type="Gene3D" id="2.40.150.20">
    <property type="entry name" value="Ribosomal protein L14"/>
    <property type="match status" value="1"/>
</dbReference>
<dbReference type="HAMAP" id="MF_01367">
    <property type="entry name" value="Ribosomal_uL14"/>
    <property type="match status" value="1"/>
</dbReference>
<dbReference type="InterPro" id="IPR000218">
    <property type="entry name" value="Ribosomal_uL14"/>
</dbReference>
<dbReference type="InterPro" id="IPR005745">
    <property type="entry name" value="Ribosomal_uL14_bac-type"/>
</dbReference>
<dbReference type="InterPro" id="IPR019972">
    <property type="entry name" value="Ribosomal_uL14_CS"/>
</dbReference>
<dbReference type="InterPro" id="IPR036853">
    <property type="entry name" value="Ribosomal_uL14_sf"/>
</dbReference>
<dbReference type="NCBIfam" id="TIGR01067">
    <property type="entry name" value="rplN_bact"/>
    <property type="match status" value="1"/>
</dbReference>
<dbReference type="PANTHER" id="PTHR11761">
    <property type="entry name" value="50S/60S RIBOSOMAL PROTEIN L14/L23"/>
    <property type="match status" value="1"/>
</dbReference>
<dbReference type="PANTHER" id="PTHR11761:SF3">
    <property type="entry name" value="LARGE RIBOSOMAL SUBUNIT PROTEIN UL14M"/>
    <property type="match status" value="1"/>
</dbReference>
<dbReference type="Pfam" id="PF00238">
    <property type="entry name" value="Ribosomal_L14"/>
    <property type="match status" value="1"/>
</dbReference>
<dbReference type="SMART" id="SM01374">
    <property type="entry name" value="Ribosomal_L14"/>
    <property type="match status" value="1"/>
</dbReference>
<dbReference type="SUPFAM" id="SSF50193">
    <property type="entry name" value="Ribosomal protein L14"/>
    <property type="match status" value="1"/>
</dbReference>
<dbReference type="PROSITE" id="PS00049">
    <property type="entry name" value="RIBOSOMAL_L14"/>
    <property type="match status" value="1"/>
</dbReference>
<geneLocation type="chloroplast"/>
<sequence>MIQPQTHLNVADNSGARELMCIRIIGASNRRYAHIGDVIVAVIKEAVPHMPLQRSEVIRAVIVRTRKELKRDNGMIIQYDDNAAVVIDQEGNPRGTRVFGAIARELRQLNFTKIVSLAPEVL</sequence>
<accession>Q09FS4</accession>
<gene>
    <name evidence="1" type="primary">rpl14</name>
</gene>
<organism>
    <name type="scientific">Nandina domestica</name>
    <name type="common">Heavenly bamboo</name>
    <dbReference type="NCBI Taxonomy" id="41776"/>
    <lineage>
        <taxon>Eukaryota</taxon>
        <taxon>Viridiplantae</taxon>
        <taxon>Streptophyta</taxon>
        <taxon>Embryophyta</taxon>
        <taxon>Tracheophyta</taxon>
        <taxon>Spermatophyta</taxon>
        <taxon>Magnoliopsida</taxon>
        <taxon>Ranunculales</taxon>
        <taxon>Berberidaceae</taxon>
        <taxon>Nandinoideae</taxon>
        <taxon>Nandineae</taxon>
        <taxon>Nandina</taxon>
    </lineage>
</organism>
<name>RK14_NANDO</name>
<evidence type="ECO:0000255" key="1">
    <source>
        <dbReference type="HAMAP-Rule" id="MF_01367"/>
    </source>
</evidence>
<evidence type="ECO:0000305" key="2"/>
<reference key="1">
    <citation type="journal article" date="2006" name="BMC Plant Biol.">
        <title>Rapid and accurate pyrosequencing of angiosperm plastid genomes.</title>
        <authorList>
            <person name="Moore M.J."/>
            <person name="Dhingra A."/>
            <person name="Soltis P.S."/>
            <person name="Shaw R."/>
            <person name="Farmerie W.G."/>
            <person name="Folta K.M."/>
            <person name="Soltis D.E."/>
        </authorList>
    </citation>
    <scope>NUCLEOTIDE SEQUENCE [LARGE SCALE GENOMIC DNA]</scope>
</reference>
<protein>
    <recommendedName>
        <fullName evidence="1">Large ribosomal subunit protein uL14c</fullName>
    </recommendedName>
    <alternativeName>
        <fullName evidence="2">50S ribosomal protein L14, chloroplastic</fullName>
    </alternativeName>
</protein>
<proteinExistence type="inferred from homology"/>
<keyword id="KW-0150">Chloroplast</keyword>
<keyword id="KW-0934">Plastid</keyword>
<keyword id="KW-0687">Ribonucleoprotein</keyword>
<keyword id="KW-0689">Ribosomal protein</keyword>
<keyword id="KW-0694">RNA-binding</keyword>
<keyword id="KW-0699">rRNA-binding</keyword>
<feature type="chain" id="PRO_0000355891" description="Large ribosomal subunit protein uL14c">
    <location>
        <begin position="1"/>
        <end position="122"/>
    </location>
</feature>